<sequence>MATTIEVKTPAGTTDGSVELPAELFDVEANIALMHQVVTAQLAAKRQGTHSTKTRGEVSGGGKKPYRQKGTGRARQGSTRAPQFTGGGTVHGPQPRDYSQRTPKKMIAAALRGALSDRARNGRIHAVTELVEGQTPSTKSAKAFLSTLTERKQVLVVIGRADETSERSVRNLPGVHIISPDQLNTYDVLKADDVVFSVEALNAYINAQTARTEKEGASA</sequence>
<evidence type="ECO:0000255" key="1">
    <source>
        <dbReference type="HAMAP-Rule" id="MF_01328"/>
    </source>
</evidence>
<evidence type="ECO:0000256" key="2">
    <source>
        <dbReference type="SAM" id="MobiDB-lite"/>
    </source>
</evidence>
<evidence type="ECO:0000305" key="3"/>
<dbReference type="EMBL" id="CP000518">
    <property type="protein sequence ID" value="ABL90245.1"/>
    <property type="molecule type" value="Genomic_DNA"/>
</dbReference>
<dbReference type="SMR" id="A1UBN7"/>
<dbReference type="STRING" id="189918.Mkms_1031"/>
<dbReference type="KEGG" id="mkm:Mkms_1031"/>
<dbReference type="HOGENOM" id="CLU_041575_5_0_11"/>
<dbReference type="OrthoDB" id="9803201at2"/>
<dbReference type="GO" id="GO:1990904">
    <property type="term" value="C:ribonucleoprotein complex"/>
    <property type="evidence" value="ECO:0007669"/>
    <property type="project" value="UniProtKB-KW"/>
</dbReference>
<dbReference type="GO" id="GO:0005840">
    <property type="term" value="C:ribosome"/>
    <property type="evidence" value="ECO:0007669"/>
    <property type="project" value="UniProtKB-KW"/>
</dbReference>
<dbReference type="GO" id="GO:0019843">
    <property type="term" value="F:rRNA binding"/>
    <property type="evidence" value="ECO:0007669"/>
    <property type="project" value="UniProtKB-UniRule"/>
</dbReference>
<dbReference type="GO" id="GO:0003735">
    <property type="term" value="F:structural constituent of ribosome"/>
    <property type="evidence" value="ECO:0007669"/>
    <property type="project" value="InterPro"/>
</dbReference>
<dbReference type="GO" id="GO:0006412">
    <property type="term" value="P:translation"/>
    <property type="evidence" value="ECO:0007669"/>
    <property type="project" value="UniProtKB-UniRule"/>
</dbReference>
<dbReference type="FunFam" id="3.40.1370.10:FF:000004">
    <property type="entry name" value="50S ribosomal protein L4"/>
    <property type="match status" value="1"/>
</dbReference>
<dbReference type="Gene3D" id="3.40.1370.10">
    <property type="match status" value="1"/>
</dbReference>
<dbReference type="HAMAP" id="MF_01328_B">
    <property type="entry name" value="Ribosomal_uL4_B"/>
    <property type="match status" value="1"/>
</dbReference>
<dbReference type="InterPro" id="IPR002136">
    <property type="entry name" value="Ribosomal_uL4"/>
</dbReference>
<dbReference type="InterPro" id="IPR013005">
    <property type="entry name" value="Ribosomal_uL4-like"/>
</dbReference>
<dbReference type="InterPro" id="IPR023574">
    <property type="entry name" value="Ribosomal_uL4_dom_sf"/>
</dbReference>
<dbReference type="NCBIfam" id="TIGR03953">
    <property type="entry name" value="rplD_bact"/>
    <property type="match status" value="1"/>
</dbReference>
<dbReference type="PANTHER" id="PTHR10746">
    <property type="entry name" value="50S RIBOSOMAL PROTEIN L4"/>
    <property type="match status" value="1"/>
</dbReference>
<dbReference type="PANTHER" id="PTHR10746:SF6">
    <property type="entry name" value="LARGE RIBOSOMAL SUBUNIT PROTEIN UL4M"/>
    <property type="match status" value="1"/>
</dbReference>
<dbReference type="Pfam" id="PF00573">
    <property type="entry name" value="Ribosomal_L4"/>
    <property type="match status" value="1"/>
</dbReference>
<dbReference type="SUPFAM" id="SSF52166">
    <property type="entry name" value="Ribosomal protein L4"/>
    <property type="match status" value="1"/>
</dbReference>
<accession>A1UBN7</accession>
<gene>
    <name evidence="1" type="primary">rplD</name>
    <name type="ordered locus">Mkms_1031</name>
</gene>
<feature type="chain" id="PRO_1000052446" description="Large ribosomal subunit protein uL4">
    <location>
        <begin position="1"/>
        <end position="219"/>
    </location>
</feature>
<feature type="region of interest" description="Disordered" evidence="2">
    <location>
        <begin position="43"/>
        <end position="100"/>
    </location>
</feature>
<organism>
    <name type="scientific">Mycobacterium sp. (strain KMS)</name>
    <dbReference type="NCBI Taxonomy" id="189918"/>
    <lineage>
        <taxon>Bacteria</taxon>
        <taxon>Bacillati</taxon>
        <taxon>Actinomycetota</taxon>
        <taxon>Actinomycetes</taxon>
        <taxon>Mycobacteriales</taxon>
        <taxon>Mycobacteriaceae</taxon>
        <taxon>Mycobacterium</taxon>
    </lineage>
</organism>
<proteinExistence type="inferred from homology"/>
<name>RL4_MYCSK</name>
<comment type="function">
    <text evidence="1">One of the primary rRNA binding proteins, this protein initially binds near the 5'-end of the 23S rRNA. It is important during the early stages of 50S assembly. It makes multiple contacts with different domains of the 23S rRNA in the assembled 50S subunit and ribosome.</text>
</comment>
<comment type="function">
    <text evidence="1">Forms part of the polypeptide exit tunnel.</text>
</comment>
<comment type="subunit">
    <text evidence="1">Part of the 50S ribosomal subunit.</text>
</comment>
<comment type="similarity">
    <text evidence="1">Belongs to the universal ribosomal protein uL4 family.</text>
</comment>
<protein>
    <recommendedName>
        <fullName evidence="1">Large ribosomal subunit protein uL4</fullName>
    </recommendedName>
    <alternativeName>
        <fullName evidence="3">50S ribosomal protein L4</fullName>
    </alternativeName>
</protein>
<keyword id="KW-0687">Ribonucleoprotein</keyword>
<keyword id="KW-0689">Ribosomal protein</keyword>
<keyword id="KW-0694">RNA-binding</keyword>
<keyword id="KW-0699">rRNA-binding</keyword>
<reference key="1">
    <citation type="submission" date="2006-12" db="EMBL/GenBank/DDBJ databases">
        <title>Complete sequence of chromosome of Mycobacterium sp. KMS.</title>
        <authorList>
            <consortium name="US DOE Joint Genome Institute"/>
            <person name="Copeland A."/>
            <person name="Lucas S."/>
            <person name="Lapidus A."/>
            <person name="Barry K."/>
            <person name="Detter J.C."/>
            <person name="Glavina del Rio T."/>
            <person name="Hammon N."/>
            <person name="Israni S."/>
            <person name="Dalin E."/>
            <person name="Tice H."/>
            <person name="Pitluck S."/>
            <person name="Kiss H."/>
            <person name="Brettin T."/>
            <person name="Bruce D."/>
            <person name="Han C."/>
            <person name="Tapia R."/>
            <person name="Gilna P."/>
            <person name="Schmutz J."/>
            <person name="Larimer F."/>
            <person name="Land M."/>
            <person name="Hauser L."/>
            <person name="Kyrpides N."/>
            <person name="Mikhailova N."/>
            <person name="Miller C.D."/>
            <person name="Richardson P."/>
        </authorList>
    </citation>
    <scope>NUCLEOTIDE SEQUENCE [LARGE SCALE GENOMIC DNA]</scope>
    <source>
        <strain>KMS</strain>
    </source>
</reference>